<dbReference type="EC" id="3.1.21.10" evidence="1"/>
<dbReference type="EMBL" id="AP010918">
    <property type="protein sequence ID" value="BAH26892.1"/>
    <property type="molecule type" value="Genomic_DNA"/>
</dbReference>
<dbReference type="RefSeq" id="WP_003413426.1">
    <property type="nucleotide sequence ID" value="NZ_CP014566.1"/>
</dbReference>
<dbReference type="SMR" id="C1AF63"/>
<dbReference type="GeneID" id="45426596"/>
<dbReference type="KEGG" id="mbt:JTY_2611"/>
<dbReference type="HOGENOM" id="CLU_091257_0_2_11"/>
<dbReference type="GO" id="GO:0005737">
    <property type="term" value="C:cytoplasm"/>
    <property type="evidence" value="ECO:0007669"/>
    <property type="project" value="UniProtKB-SubCell"/>
</dbReference>
<dbReference type="GO" id="GO:0048476">
    <property type="term" value="C:Holliday junction resolvase complex"/>
    <property type="evidence" value="ECO:0007669"/>
    <property type="project" value="UniProtKB-UniRule"/>
</dbReference>
<dbReference type="GO" id="GO:0008821">
    <property type="term" value="F:crossover junction DNA endonuclease activity"/>
    <property type="evidence" value="ECO:0007669"/>
    <property type="project" value="UniProtKB-UniRule"/>
</dbReference>
<dbReference type="GO" id="GO:0003677">
    <property type="term" value="F:DNA binding"/>
    <property type="evidence" value="ECO:0007669"/>
    <property type="project" value="UniProtKB-KW"/>
</dbReference>
<dbReference type="GO" id="GO:0000287">
    <property type="term" value="F:magnesium ion binding"/>
    <property type="evidence" value="ECO:0007669"/>
    <property type="project" value="UniProtKB-UniRule"/>
</dbReference>
<dbReference type="GO" id="GO:0006310">
    <property type="term" value="P:DNA recombination"/>
    <property type="evidence" value="ECO:0007669"/>
    <property type="project" value="UniProtKB-UniRule"/>
</dbReference>
<dbReference type="GO" id="GO:0006281">
    <property type="term" value="P:DNA repair"/>
    <property type="evidence" value="ECO:0007669"/>
    <property type="project" value="UniProtKB-UniRule"/>
</dbReference>
<dbReference type="CDD" id="cd16962">
    <property type="entry name" value="RuvC"/>
    <property type="match status" value="1"/>
</dbReference>
<dbReference type="FunFam" id="3.30.420.10:FF:000002">
    <property type="entry name" value="Crossover junction endodeoxyribonuclease RuvC"/>
    <property type="match status" value="1"/>
</dbReference>
<dbReference type="Gene3D" id="3.30.420.10">
    <property type="entry name" value="Ribonuclease H-like superfamily/Ribonuclease H"/>
    <property type="match status" value="1"/>
</dbReference>
<dbReference type="HAMAP" id="MF_00034">
    <property type="entry name" value="RuvC"/>
    <property type="match status" value="1"/>
</dbReference>
<dbReference type="InterPro" id="IPR012337">
    <property type="entry name" value="RNaseH-like_sf"/>
</dbReference>
<dbReference type="InterPro" id="IPR036397">
    <property type="entry name" value="RNaseH_sf"/>
</dbReference>
<dbReference type="InterPro" id="IPR020563">
    <property type="entry name" value="X-over_junc_endoDNase_Mg_BS"/>
</dbReference>
<dbReference type="InterPro" id="IPR002176">
    <property type="entry name" value="X-over_junc_endoDNase_RuvC"/>
</dbReference>
<dbReference type="NCBIfam" id="TIGR00228">
    <property type="entry name" value="ruvC"/>
    <property type="match status" value="1"/>
</dbReference>
<dbReference type="PANTHER" id="PTHR30194">
    <property type="entry name" value="CROSSOVER JUNCTION ENDODEOXYRIBONUCLEASE RUVC"/>
    <property type="match status" value="1"/>
</dbReference>
<dbReference type="PANTHER" id="PTHR30194:SF3">
    <property type="entry name" value="CROSSOVER JUNCTION ENDODEOXYRIBONUCLEASE RUVC"/>
    <property type="match status" value="1"/>
</dbReference>
<dbReference type="Pfam" id="PF02075">
    <property type="entry name" value="RuvC"/>
    <property type="match status" value="1"/>
</dbReference>
<dbReference type="PRINTS" id="PR00696">
    <property type="entry name" value="RSOLVASERUVC"/>
</dbReference>
<dbReference type="SUPFAM" id="SSF53098">
    <property type="entry name" value="Ribonuclease H-like"/>
    <property type="match status" value="1"/>
</dbReference>
<dbReference type="PROSITE" id="PS01321">
    <property type="entry name" value="RUVC"/>
    <property type="match status" value="1"/>
</dbReference>
<accession>C1AF63</accession>
<name>RUVC_MYCBT</name>
<reference key="1">
    <citation type="journal article" date="2009" name="Vaccine">
        <title>Whole genome sequence analysis of Mycobacterium bovis bacillus Calmette-Guerin (BCG) Tokyo 172: a comparative study of BCG vaccine substrains.</title>
        <authorList>
            <person name="Seki M."/>
            <person name="Honda I."/>
            <person name="Fujita I."/>
            <person name="Yano I."/>
            <person name="Yamamoto S."/>
            <person name="Koyama A."/>
        </authorList>
    </citation>
    <scope>NUCLEOTIDE SEQUENCE [LARGE SCALE GENOMIC DNA]</scope>
    <source>
        <strain>BCG / Tokyo 172 / ATCC 35737 / TMC 1019</strain>
    </source>
</reference>
<protein>
    <recommendedName>
        <fullName evidence="1">Crossover junction endodeoxyribonuclease RuvC</fullName>
        <ecNumber evidence="1">3.1.21.10</ecNumber>
    </recommendedName>
    <alternativeName>
        <fullName evidence="1">Holliday junction nuclease RuvC</fullName>
    </alternativeName>
    <alternativeName>
        <fullName evidence="1">Holliday junction resolvase RuvC</fullName>
    </alternativeName>
</protein>
<sequence length="188" mass="19786">MRVMGVDPGLTRCGLSLIESGRGRQLTALDVDVVRTPSDAALAQRLLAISDAVEHWLDTHHPEVVAIERVFSQLNVTTVMGTAQAGGVIALAAAKRGVDVHFHTPSEVKAAVTGNGSADKAQVTAMVTKILALQAKPTPADAADALALAICHCWRAPTIARMAEATSRAEARAAQQRHAYLAKLKAAR</sequence>
<gene>
    <name evidence="1" type="primary">ruvC</name>
    <name type="ordered locus">JTY_2611</name>
</gene>
<comment type="function">
    <text evidence="1">The RuvA-RuvB-RuvC complex processes Holliday junction (HJ) DNA during genetic recombination and DNA repair. Endonuclease that resolves HJ intermediates. Cleaves cruciform DNA by making single-stranded nicks across the HJ at symmetrical positions within the homologous arms, yielding a 5'-phosphate and a 3'-hydroxyl group; requires a central core of homology in the junction. The consensus cleavage sequence is 5'-(A/T)TT(C/G)-3'. Cleavage occurs on the 3'-side of the TT dinucleotide at the point of strand exchange. HJ branch migration catalyzed by RuvA-RuvB allows RuvC to scan DNA until it finds its consensus sequence, where it cleaves and resolves the cruciform DNA.</text>
</comment>
<comment type="catalytic activity">
    <reaction evidence="1">
        <text>Endonucleolytic cleavage at a junction such as a reciprocal single-stranded crossover between two homologous DNA duplexes (Holliday junction).</text>
        <dbReference type="EC" id="3.1.21.10"/>
    </reaction>
</comment>
<comment type="cofactor">
    <cofactor evidence="1">
        <name>Mg(2+)</name>
        <dbReference type="ChEBI" id="CHEBI:18420"/>
    </cofactor>
    <text evidence="1">Binds 2 Mg(2+) ion per subunit.</text>
</comment>
<comment type="subunit">
    <text evidence="1">Homodimer which binds Holliday junction (HJ) DNA. The HJ becomes 2-fold symmetrical on binding to RuvC with unstacked arms; it has a different conformation from HJ DNA in complex with RuvA. In the full resolvosome a probable DNA-RuvA(4)-RuvB(12)-RuvC(2) complex forms which resolves the HJ.</text>
</comment>
<comment type="subcellular location">
    <subcellularLocation>
        <location evidence="1">Cytoplasm</location>
    </subcellularLocation>
</comment>
<comment type="similarity">
    <text evidence="1">Belongs to the RuvC family.</text>
</comment>
<organism>
    <name type="scientific">Mycobacterium bovis (strain BCG / Tokyo 172 / ATCC 35737 / TMC 1019)</name>
    <dbReference type="NCBI Taxonomy" id="561275"/>
    <lineage>
        <taxon>Bacteria</taxon>
        <taxon>Bacillati</taxon>
        <taxon>Actinomycetota</taxon>
        <taxon>Actinomycetes</taxon>
        <taxon>Mycobacteriales</taxon>
        <taxon>Mycobacteriaceae</taxon>
        <taxon>Mycobacterium</taxon>
        <taxon>Mycobacterium tuberculosis complex</taxon>
    </lineage>
</organism>
<feature type="chain" id="PRO_1000195264" description="Crossover junction endodeoxyribonuclease RuvC">
    <location>
        <begin position="1"/>
        <end position="188"/>
    </location>
</feature>
<feature type="active site" evidence="1">
    <location>
        <position position="7"/>
    </location>
</feature>
<feature type="active site" evidence="1">
    <location>
        <position position="68"/>
    </location>
</feature>
<feature type="active site" evidence="1">
    <location>
        <position position="141"/>
    </location>
</feature>
<feature type="binding site" evidence="1">
    <location>
        <position position="7"/>
    </location>
    <ligand>
        <name>Mg(2+)</name>
        <dbReference type="ChEBI" id="CHEBI:18420"/>
        <label>1</label>
    </ligand>
</feature>
<feature type="binding site" evidence="1">
    <location>
        <position position="68"/>
    </location>
    <ligand>
        <name>Mg(2+)</name>
        <dbReference type="ChEBI" id="CHEBI:18420"/>
        <label>2</label>
    </ligand>
</feature>
<feature type="binding site" evidence="1">
    <location>
        <position position="141"/>
    </location>
    <ligand>
        <name>Mg(2+)</name>
        <dbReference type="ChEBI" id="CHEBI:18420"/>
        <label>1</label>
    </ligand>
</feature>
<keyword id="KW-0963">Cytoplasm</keyword>
<keyword id="KW-0227">DNA damage</keyword>
<keyword id="KW-0233">DNA recombination</keyword>
<keyword id="KW-0234">DNA repair</keyword>
<keyword id="KW-0238">DNA-binding</keyword>
<keyword id="KW-0255">Endonuclease</keyword>
<keyword id="KW-0378">Hydrolase</keyword>
<keyword id="KW-0460">Magnesium</keyword>
<keyword id="KW-0479">Metal-binding</keyword>
<keyword id="KW-0540">Nuclease</keyword>
<evidence type="ECO:0000255" key="1">
    <source>
        <dbReference type="HAMAP-Rule" id="MF_00034"/>
    </source>
</evidence>
<proteinExistence type="inferred from homology"/>